<name>Y412_MYCPN</name>
<reference key="1">
    <citation type="journal article" date="1996" name="Nucleic Acids Res.">
        <title>Complete sequence analysis of the genome of the bacterium Mycoplasma pneumoniae.</title>
        <authorList>
            <person name="Himmelreich R."/>
            <person name="Hilbert H."/>
            <person name="Plagens H."/>
            <person name="Pirkl E."/>
            <person name="Li B.-C."/>
            <person name="Herrmann R."/>
        </authorList>
    </citation>
    <scope>NUCLEOTIDE SEQUENCE [LARGE SCALE GENOMIC DNA]</scope>
    <source>
        <strain>ATCC 29342 / M129 / Subtype 1</strain>
    </source>
</reference>
<reference key="2">
    <citation type="journal article" date="2000" name="Nucleic Acids Res.">
        <title>Re-annotating the Mycoplasma pneumoniae genome sequence: adding value, function and reading frames.</title>
        <authorList>
            <person name="Dandekar T."/>
            <person name="Huynen M."/>
            <person name="Regula J.T."/>
            <person name="Ueberle B."/>
            <person name="Zimmermann C.U."/>
            <person name="Andrade M.A."/>
            <person name="Doerks T."/>
            <person name="Sanchez-Pulido L."/>
            <person name="Snel B."/>
            <person name="Suyama M."/>
            <person name="Yuan Y.P."/>
            <person name="Herrmann R."/>
            <person name="Bork P."/>
        </authorList>
    </citation>
    <scope>IDENTIFICATION</scope>
    <source>
        <strain>ATCC 29342 / M129 / Subtype 1</strain>
    </source>
</reference>
<proteinExistence type="inferred from homology"/>
<evidence type="ECO:0000256" key="1">
    <source>
        <dbReference type="SAM" id="MobiDB-lite"/>
    </source>
</evidence>
<evidence type="ECO:0000305" key="2"/>
<feature type="chain" id="PRO_0000210673" description="Uncharacterized protein MPN_412">
    <location>
        <begin position="1"/>
        <end position="278"/>
    </location>
</feature>
<feature type="region of interest" description="Disordered" evidence="1">
    <location>
        <begin position="1"/>
        <end position="86"/>
    </location>
</feature>
<feature type="region of interest" description="Disordered" evidence="1">
    <location>
        <begin position="98"/>
        <end position="126"/>
    </location>
</feature>
<feature type="compositionally biased region" description="Basic and acidic residues" evidence="1">
    <location>
        <begin position="1"/>
        <end position="16"/>
    </location>
</feature>
<feature type="compositionally biased region" description="Low complexity" evidence="1">
    <location>
        <begin position="33"/>
        <end position="45"/>
    </location>
</feature>
<feature type="compositionally biased region" description="Low complexity" evidence="1">
    <location>
        <begin position="99"/>
        <end position="117"/>
    </location>
</feature>
<comment type="similarity">
    <text evidence="2">Belongs to the adhesin P1 family.</text>
</comment>
<organism>
    <name type="scientific">Mycoplasma pneumoniae (strain ATCC 29342 / M129 / Subtype 1)</name>
    <name type="common">Mycoplasmoides pneumoniae</name>
    <dbReference type="NCBI Taxonomy" id="272634"/>
    <lineage>
        <taxon>Bacteria</taxon>
        <taxon>Bacillati</taxon>
        <taxon>Mycoplasmatota</taxon>
        <taxon>Mycoplasmoidales</taxon>
        <taxon>Mycoplasmoidaceae</taxon>
        <taxon>Mycoplasmoides</taxon>
    </lineage>
</organism>
<keyword id="KW-1185">Reference proteome</keyword>
<dbReference type="EMBL" id="U00089">
    <property type="protein sequence ID" value="AAG34749.1"/>
    <property type="molecule type" value="Genomic_DNA"/>
</dbReference>
<dbReference type="RefSeq" id="NP_110100.1">
    <property type="nucleotide sequence ID" value="NC_000912.1"/>
</dbReference>
<dbReference type="SMR" id="Q9EXD5"/>
<dbReference type="STRING" id="272634.MPN_412"/>
<dbReference type="EnsemblBacteria" id="AAG34749">
    <property type="protein sequence ID" value="AAG34749"/>
    <property type="gene ID" value="MPN_412"/>
</dbReference>
<dbReference type="KEGG" id="mpn:MPN_412"/>
<dbReference type="PATRIC" id="fig|272634.6.peg.447"/>
<dbReference type="HOGENOM" id="CLU_053128_0_0_14"/>
<dbReference type="BioCyc" id="MPNE272634:G1GJ3-668-MONOMER"/>
<dbReference type="Proteomes" id="UP000000808">
    <property type="component" value="Chromosome"/>
</dbReference>
<dbReference type="InterPro" id="IPR022116">
    <property type="entry name" value="P1_N"/>
</dbReference>
<dbReference type="Pfam" id="PF12378">
    <property type="entry name" value="P1_N"/>
    <property type="match status" value="1"/>
</dbReference>
<protein>
    <recommendedName>
        <fullName>Uncharacterized protein MPN_412</fullName>
    </recommendedName>
</protein>
<accession>Q9EXD5</accession>
<gene>
    <name type="ordered locus">MPN_412</name>
    <name type="ORF">A05_orf278</name>
    <name type="ORF">MP426.2</name>
</gene>
<sequence>MFGLKVKDAQKDDQKSSEYLSGEAGSQAGGSTQGTSTTTQRRGSSNENKVKVLQVAMKKKSDSEDNGQIELETNNLANAPIKRGSNNNQQVQLKADDFGTTSSSESGQSGTQGSTPSNPGPWTPWLTTEQIHNDPAKFAASILILYDAPYARNRTAIDRVDHLDPKVMTANYPPSWRTPKWNHHGLWDWKARDVLLQTTGFFNPRRHPEWFDGGQTVADNEKTGFDVDNSENTKQGFQKEADSDKSAPIALPFEAYFANIGNLTWFGQALLVFGICLS</sequence>